<name>VPR_SIVTN</name>
<reference key="1">
    <citation type="journal article" date="2003" name="J. Virol.">
        <title>Amplification of a complete simian immunodeficiency virus genome from fecal RNA of a wild chimpanzee.</title>
        <authorList>
            <person name="Santiago M.L."/>
            <person name="Bibollet-Ruche F."/>
            <person name="Bailes E."/>
            <person name="Kamenya S."/>
            <person name="Muller M.N."/>
            <person name="Lukasik M."/>
            <person name="Pusey A.E."/>
            <person name="Collins D.A."/>
            <person name="Wrangham R.W."/>
            <person name="Goodall J."/>
            <person name="Shaw G.M."/>
            <person name="Sharp P.M."/>
            <person name="Hahn B.H."/>
        </authorList>
    </citation>
    <scope>NUCLEOTIDE SEQUENCE [GENOMIC RNA]</scope>
</reference>
<comment type="function">
    <text evidence="1">Stimulates gene expression driven by the HIV-2 LTR. Prevents infected cells from undergoing mitosis and proliferating, by inducing arrest or delay in the G2 phase of the cell cycle. Cell cycle arrest creates a favorable environment for maximizing viral expression and production (By similarity).</text>
</comment>
<comment type="subunit">
    <text evidence="1">Interacts with human UNG.</text>
</comment>
<comment type="subcellular location">
    <subcellularLocation>
        <location>Virion</location>
    </subcellularLocation>
    <subcellularLocation>
        <location evidence="1">Host nucleus</location>
    </subcellularLocation>
</comment>
<organismHost>
    <name type="scientific">Pan troglodytes</name>
    <name type="common">Chimpanzee</name>
    <dbReference type="NCBI Taxonomy" id="9598"/>
</organismHost>
<protein>
    <recommendedName>
        <fullName>Protein Vpr</fullName>
    </recommendedName>
    <alternativeName>
        <fullName>R ORF protein</fullName>
    </alternativeName>
    <alternativeName>
        <fullName>Viral protein R</fullName>
    </alternativeName>
</protein>
<organism>
    <name type="scientific">Simian immunodeficiency virus (isolate TAN1)</name>
    <name type="common">SIV-cpz</name>
    <name type="synonym">Chimpanzee immunodeficiency virus</name>
    <dbReference type="NCBI Taxonomy" id="388910"/>
    <lineage>
        <taxon>Viruses</taxon>
        <taxon>Riboviria</taxon>
        <taxon>Pararnavirae</taxon>
        <taxon>Artverviricota</taxon>
        <taxon>Revtraviricetes</taxon>
        <taxon>Ortervirales</taxon>
        <taxon>Retroviridae</taxon>
        <taxon>Orthoretrovirinae</taxon>
        <taxon>Lentivirus</taxon>
        <taxon>Simian immunodeficiency virus</taxon>
    </lineage>
</organism>
<feature type="chain" id="PRO_0000248299" description="Protein Vpr">
    <location>
        <begin position="1"/>
        <end position="83"/>
    </location>
</feature>
<feature type="modified residue" description="Phosphoserine; by host" evidence="1">
    <location>
        <position position="79"/>
    </location>
</feature>
<keyword id="KW-0010">Activator</keyword>
<keyword id="KW-0014">AIDS</keyword>
<keyword id="KW-0131">Cell cycle</keyword>
<keyword id="KW-1048">Host nucleus</keyword>
<keyword id="KW-0945">Host-virus interaction</keyword>
<keyword id="KW-0597">Phosphoprotein</keyword>
<keyword id="KW-1185">Reference proteome</keyword>
<keyword id="KW-0804">Transcription</keyword>
<keyword id="KW-0805">Transcription regulation</keyword>
<keyword id="KW-1163">Viral penetration into host nucleus</keyword>
<keyword id="KW-0946">Virion</keyword>
<keyword id="KW-1160">Virus entry into host cell</keyword>
<accession>Q8AIH9</accession>
<sequence length="83" mass="9702">MEQAPNDNGPQREPYTEWLLDILEEIKQEAVKHFPRPILQGVGNWVFTIYGDSWEGVQELIKILQRALFTHYRHGCIHSRIGS</sequence>
<dbReference type="EMBL" id="AF447763">
    <property type="protein sequence ID" value="AAO13962.1"/>
    <property type="molecule type" value="Genomic_RNA"/>
</dbReference>
<dbReference type="SMR" id="Q8AIH9"/>
<dbReference type="Proteomes" id="UP000007222">
    <property type="component" value="Segment"/>
</dbReference>
<dbReference type="GO" id="GO:0043657">
    <property type="term" value="C:host cell"/>
    <property type="evidence" value="ECO:0007669"/>
    <property type="project" value="GOC"/>
</dbReference>
<dbReference type="GO" id="GO:0042025">
    <property type="term" value="C:host cell nucleus"/>
    <property type="evidence" value="ECO:0007669"/>
    <property type="project" value="UniProtKB-SubCell"/>
</dbReference>
<dbReference type="GO" id="GO:0044423">
    <property type="term" value="C:virion component"/>
    <property type="evidence" value="ECO:0007669"/>
    <property type="project" value="UniProtKB-KW"/>
</dbReference>
<dbReference type="GO" id="GO:0046718">
    <property type="term" value="P:symbiont entry into host cell"/>
    <property type="evidence" value="ECO:0007669"/>
    <property type="project" value="UniProtKB-KW"/>
</dbReference>
<dbReference type="GO" id="GO:0075732">
    <property type="term" value="P:viral penetration into host nucleus"/>
    <property type="evidence" value="ECO:0007669"/>
    <property type="project" value="UniProtKB-KW"/>
</dbReference>
<dbReference type="Gene3D" id="6.10.210.10">
    <property type="match status" value="1"/>
</dbReference>
<dbReference type="Gene3D" id="1.20.5.90">
    <property type="entry name" value="VpR/VpX protein, C-terminal domain"/>
    <property type="match status" value="1"/>
</dbReference>
<dbReference type="InterPro" id="IPR000012">
    <property type="entry name" value="RetroV_VpR/X"/>
</dbReference>
<dbReference type="Pfam" id="PF00522">
    <property type="entry name" value="VPR"/>
    <property type="match status" value="1"/>
</dbReference>
<dbReference type="PRINTS" id="PR00444">
    <property type="entry name" value="HIVVPRVPX"/>
</dbReference>
<evidence type="ECO:0000250" key="1"/>
<proteinExistence type="inferred from homology"/>